<dbReference type="EC" id="2.7.11.1"/>
<dbReference type="EMBL" id="AP003215">
    <property type="protein sequence ID" value="BAB62563.1"/>
    <property type="molecule type" value="Genomic_DNA"/>
</dbReference>
<dbReference type="EMBL" id="AP003215">
    <property type="protein sequence ID" value="BAD68122.1"/>
    <property type="status" value="ALT_SEQ"/>
    <property type="molecule type" value="Genomic_DNA"/>
</dbReference>
<dbReference type="EMBL" id="AP008207">
    <property type="protein sequence ID" value="BAF04080.1"/>
    <property type="molecule type" value="Genomic_DNA"/>
</dbReference>
<dbReference type="EMBL" id="AP014957">
    <property type="protein sequence ID" value="BAS70659.1"/>
    <property type="molecule type" value="Genomic_DNA"/>
</dbReference>
<dbReference type="EMBL" id="AK062282">
    <property type="protein sequence ID" value="BAG88260.1"/>
    <property type="molecule type" value="mRNA"/>
</dbReference>
<dbReference type="EMBL" id="AK101660">
    <property type="protein sequence ID" value="BAG95175.1"/>
    <property type="molecule type" value="mRNA"/>
</dbReference>
<dbReference type="RefSeq" id="XP_015621542.1">
    <property type="nucleotide sequence ID" value="XM_015766056.1"/>
</dbReference>
<dbReference type="RefSeq" id="XP_015621543.1">
    <property type="nucleotide sequence ID" value="XM_015766057.1"/>
</dbReference>
<dbReference type="RefSeq" id="XP_015621544.1">
    <property type="nucleotide sequence ID" value="XM_015766058.1"/>
</dbReference>
<dbReference type="SMR" id="Q94E49"/>
<dbReference type="FunCoup" id="Q94E49">
    <property type="interactions" value="48"/>
</dbReference>
<dbReference type="STRING" id="39947.Q94E49"/>
<dbReference type="PaxDb" id="39947-Q94E49"/>
<dbReference type="EnsemblPlants" id="Os01t0174700-01">
    <property type="protein sequence ID" value="Os01t0174700-01"/>
    <property type="gene ID" value="Os01g0174700"/>
</dbReference>
<dbReference type="Gramene" id="Os01t0174700-01">
    <property type="protein sequence ID" value="Os01t0174700-01"/>
    <property type="gene ID" value="Os01g0174700"/>
</dbReference>
<dbReference type="KEGG" id="dosa:Os01g0174700"/>
<dbReference type="eggNOG" id="KOG0610">
    <property type="taxonomic scope" value="Eukaryota"/>
</dbReference>
<dbReference type="InParanoid" id="Q94E49"/>
<dbReference type="OMA" id="YEMICGY"/>
<dbReference type="OrthoDB" id="432483at2759"/>
<dbReference type="Proteomes" id="UP000000763">
    <property type="component" value="Chromosome 1"/>
</dbReference>
<dbReference type="Proteomes" id="UP000059680">
    <property type="component" value="Chromosome 1"/>
</dbReference>
<dbReference type="ExpressionAtlas" id="Q94E49">
    <property type="expression patterns" value="baseline and differential"/>
</dbReference>
<dbReference type="GO" id="GO:0005737">
    <property type="term" value="C:cytoplasm"/>
    <property type="evidence" value="ECO:0000318"/>
    <property type="project" value="GO_Central"/>
</dbReference>
<dbReference type="GO" id="GO:0005634">
    <property type="term" value="C:nucleus"/>
    <property type="evidence" value="ECO:0000318"/>
    <property type="project" value="GO_Central"/>
</dbReference>
<dbReference type="GO" id="GO:0005886">
    <property type="term" value="C:plasma membrane"/>
    <property type="evidence" value="ECO:0000318"/>
    <property type="project" value="GO_Central"/>
</dbReference>
<dbReference type="GO" id="GO:0005524">
    <property type="term" value="F:ATP binding"/>
    <property type="evidence" value="ECO:0007669"/>
    <property type="project" value="UniProtKB-KW"/>
</dbReference>
<dbReference type="GO" id="GO:0106310">
    <property type="term" value="F:protein serine kinase activity"/>
    <property type="evidence" value="ECO:0007669"/>
    <property type="project" value="RHEA"/>
</dbReference>
<dbReference type="GO" id="GO:0004674">
    <property type="term" value="F:protein serine/threonine kinase activity"/>
    <property type="evidence" value="ECO:0000318"/>
    <property type="project" value="GO_Central"/>
</dbReference>
<dbReference type="GO" id="GO:0009734">
    <property type="term" value="P:auxin-activated signaling pathway"/>
    <property type="evidence" value="ECO:0007669"/>
    <property type="project" value="UniProtKB-KW"/>
</dbReference>
<dbReference type="GO" id="GO:0048825">
    <property type="term" value="P:cotyledon development"/>
    <property type="evidence" value="ECO:0007669"/>
    <property type="project" value="EnsemblPlants"/>
</dbReference>
<dbReference type="CDD" id="cd05574">
    <property type="entry name" value="STKc_phototropin_like"/>
    <property type="match status" value="1"/>
</dbReference>
<dbReference type="FunFam" id="1.10.510.10:FF:000277">
    <property type="entry name" value="protein kinase PINOID"/>
    <property type="match status" value="1"/>
</dbReference>
<dbReference type="FunFam" id="3.30.200.20:FF:000351">
    <property type="entry name" value="protein kinase PINOID 2"/>
    <property type="match status" value="1"/>
</dbReference>
<dbReference type="FunFam" id="1.10.510.10:FF:000020">
    <property type="entry name" value="serine/threonine-protein kinase D6PK-like"/>
    <property type="match status" value="1"/>
</dbReference>
<dbReference type="Gene3D" id="3.30.200.20">
    <property type="entry name" value="Phosphorylase Kinase, domain 1"/>
    <property type="match status" value="1"/>
</dbReference>
<dbReference type="Gene3D" id="1.10.510.10">
    <property type="entry name" value="Transferase(Phosphotransferase) domain 1"/>
    <property type="match status" value="2"/>
</dbReference>
<dbReference type="InterPro" id="IPR011009">
    <property type="entry name" value="Kinase-like_dom_sf"/>
</dbReference>
<dbReference type="InterPro" id="IPR000719">
    <property type="entry name" value="Prot_kinase_dom"/>
</dbReference>
<dbReference type="InterPro" id="IPR008271">
    <property type="entry name" value="Ser/Thr_kinase_AS"/>
</dbReference>
<dbReference type="PANTHER" id="PTHR45637">
    <property type="entry name" value="FLIPPASE KINASE 1-RELATED"/>
    <property type="match status" value="1"/>
</dbReference>
<dbReference type="Pfam" id="PF00069">
    <property type="entry name" value="Pkinase"/>
    <property type="match status" value="2"/>
</dbReference>
<dbReference type="SMART" id="SM00220">
    <property type="entry name" value="S_TKc"/>
    <property type="match status" value="1"/>
</dbReference>
<dbReference type="SUPFAM" id="SSF56112">
    <property type="entry name" value="Protein kinase-like (PK-like)"/>
    <property type="match status" value="1"/>
</dbReference>
<dbReference type="PROSITE" id="PS50011">
    <property type="entry name" value="PROTEIN_KINASE_DOM"/>
    <property type="match status" value="1"/>
</dbReference>
<dbReference type="PROSITE" id="PS00108">
    <property type="entry name" value="PROTEIN_KINASE_ST"/>
    <property type="match status" value="1"/>
</dbReference>
<reference key="1">
    <citation type="journal article" date="2002" name="Nature">
        <title>The genome sequence and structure of rice chromosome 1.</title>
        <authorList>
            <person name="Sasaki T."/>
            <person name="Matsumoto T."/>
            <person name="Yamamoto K."/>
            <person name="Sakata K."/>
            <person name="Baba T."/>
            <person name="Katayose Y."/>
            <person name="Wu J."/>
            <person name="Niimura Y."/>
            <person name="Cheng Z."/>
            <person name="Nagamura Y."/>
            <person name="Antonio B.A."/>
            <person name="Kanamori H."/>
            <person name="Hosokawa S."/>
            <person name="Masukawa M."/>
            <person name="Arikawa K."/>
            <person name="Chiden Y."/>
            <person name="Hayashi M."/>
            <person name="Okamoto M."/>
            <person name="Ando T."/>
            <person name="Aoki H."/>
            <person name="Arita K."/>
            <person name="Hamada M."/>
            <person name="Harada C."/>
            <person name="Hijishita S."/>
            <person name="Honda M."/>
            <person name="Ichikawa Y."/>
            <person name="Idonuma A."/>
            <person name="Iijima M."/>
            <person name="Ikeda M."/>
            <person name="Ikeno M."/>
            <person name="Ito S."/>
            <person name="Ito T."/>
            <person name="Ito Y."/>
            <person name="Ito Y."/>
            <person name="Iwabuchi A."/>
            <person name="Kamiya K."/>
            <person name="Karasawa W."/>
            <person name="Katagiri S."/>
            <person name="Kikuta A."/>
            <person name="Kobayashi N."/>
            <person name="Kono I."/>
            <person name="Machita K."/>
            <person name="Maehara T."/>
            <person name="Mizuno H."/>
            <person name="Mizubayashi T."/>
            <person name="Mukai Y."/>
            <person name="Nagasaki H."/>
            <person name="Nakashima M."/>
            <person name="Nakama Y."/>
            <person name="Nakamichi Y."/>
            <person name="Nakamura M."/>
            <person name="Namiki N."/>
            <person name="Negishi M."/>
            <person name="Ohta I."/>
            <person name="Ono N."/>
            <person name="Saji S."/>
            <person name="Sakai K."/>
            <person name="Shibata M."/>
            <person name="Shimokawa T."/>
            <person name="Shomura A."/>
            <person name="Song J."/>
            <person name="Takazaki Y."/>
            <person name="Terasawa K."/>
            <person name="Tsuji K."/>
            <person name="Waki K."/>
            <person name="Yamagata H."/>
            <person name="Yamane H."/>
            <person name="Yoshiki S."/>
            <person name="Yoshihara R."/>
            <person name="Yukawa K."/>
            <person name="Zhong H."/>
            <person name="Iwama H."/>
            <person name="Endo T."/>
            <person name="Ito H."/>
            <person name="Hahn J.H."/>
            <person name="Kim H.-I."/>
            <person name="Eun M.-Y."/>
            <person name="Yano M."/>
            <person name="Jiang J."/>
            <person name="Gojobori T."/>
        </authorList>
    </citation>
    <scope>NUCLEOTIDE SEQUENCE [LARGE SCALE GENOMIC DNA]</scope>
    <source>
        <strain>cv. Nipponbare</strain>
    </source>
</reference>
<reference key="2">
    <citation type="journal article" date="2005" name="Nature">
        <title>The map-based sequence of the rice genome.</title>
        <authorList>
            <consortium name="International rice genome sequencing project (IRGSP)"/>
        </authorList>
    </citation>
    <scope>NUCLEOTIDE SEQUENCE [LARGE SCALE GENOMIC DNA]</scope>
    <source>
        <strain>cv. Nipponbare</strain>
    </source>
</reference>
<reference key="3">
    <citation type="journal article" date="2008" name="Nucleic Acids Res.">
        <title>The rice annotation project database (RAP-DB): 2008 update.</title>
        <authorList>
            <consortium name="The rice annotation project (RAP)"/>
        </authorList>
    </citation>
    <scope>GENOME REANNOTATION</scope>
    <source>
        <strain>cv. Nipponbare</strain>
    </source>
</reference>
<reference key="4">
    <citation type="journal article" date="2013" name="Rice">
        <title>Improvement of the Oryza sativa Nipponbare reference genome using next generation sequence and optical map data.</title>
        <authorList>
            <person name="Kawahara Y."/>
            <person name="de la Bastide M."/>
            <person name="Hamilton J.P."/>
            <person name="Kanamori H."/>
            <person name="McCombie W.R."/>
            <person name="Ouyang S."/>
            <person name="Schwartz D.C."/>
            <person name="Tanaka T."/>
            <person name="Wu J."/>
            <person name="Zhou S."/>
            <person name="Childs K.L."/>
            <person name="Davidson R.M."/>
            <person name="Lin H."/>
            <person name="Quesada-Ocampo L."/>
            <person name="Vaillancourt B."/>
            <person name="Sakai H."/>
            <person name="Lee S.S."/>
            <person name="Kim J."/>
            <person name="Numa H."/>
            <person name="Itoh T."/>
            <person name="Buell C.R."/>
            <person name="Matsumoto T."/>
        </authorList>
    </citation>
    <scope>GENOME REANNOTATION</scope>
    <source>
        <strain>cv. Nipponbare</strain>
    </source>
</reference>
<reference key="5">
    <citation type="journal article" date="2003" name="Science">
        <title>Collection, mapping, and annotation of over 28,000 cDNA clones from japonica rice.</title>
        <authorList>
            <consortium name="The rice full-length cDNA consortium"/>
        </authorList>
    </citation>
    <scope>NUCLEOTIDE SEQUENCE [LARGE SCALE MRNA]</scope>
    <source>
        <strain>cv. Nipponbare</strain>
    </source>
</reference>
<proteinExistence type="evidence at transcript level"/>
<comment type="function">
    <text evidence="1">Serine/threonine-protein kinase involved in the regulation of auxin signaling.</text>
</comment>
<comment type="catalytic activity">
    <reaction>
        <text>L-seryl-[protein] + ATP = O-phospho-L-seryl-[protein] + ADP + H(+)</text>
        <dbReference type="Rhea" id="RHEA:17989"/>
        <dbReference type="Rhea" id="RHEA-COMP:9863"/>
        <dbReference type="Rhea" id="RHEA-COMP:11604"/>
        <dbReference type="ChEBI" id="CHEBI:15378"/>
        <dbReference type="ChEBI" id="CHEBI:29999"/>
        <dbReference type="ChEBI" id="CHEBI:30616"/>
        <dbReference type="ChEBI" id="CHEBI:83421"/>
        <dbReference type="ChEBI" id="CHEBI:456216"/>
        <dbReference type="EC" id="2.7.11.1"/>
    </reaction>
</comment>
<comment type="catalytic activity">
    <reaction>
        <text>L-threonyl-[protein] + ATP = O-phospho-L-threonyl-[protein] + ADP + H(+)</text>
        <dbReference type="Rhea" id="RHEA:46608"/>
        <dbReference type="Rhea" id="RHEA-COMP:11060"/>
        <dbReference type="Rhea" id="RHEA-COMP:11605"/>
        <dbReference type="ChEBI" id="CHEBI:15378"/>
        <dbReference type="ChEBI" id="CHEBI:30013"/>
        <dbReference type="ChEBI" id="CHEBI:30616"/>
        <dbReference type="ChEBI" id="CHEBI:61977"/>
        <dbReference type="ChEBI" id="CHEBI:456216"/>
        <dbReference type="EC" id="2.7.11.1"/>
    </reaction>
</comment>
<comment type="similarity">
    <text evidence="2">Belongs to the protein kinase superfamily. Ser/Thr protein kinase family.</text>
</comment>
<comment type="sequence caution" evidence="5">
    <conflict type="erroneous gene model prediction">
        <sequence resource="EMBL-CDS" id="BAD68122"/>
    </conflict>
</comment>
<organism>
    <name type="scientific">Oryza sativa subsp. japonica</name>
    <name type="common">Rice</name>
    <dbReference type="NCBI Taxonomy" id="39947"/>
    <lineage>
        <taxon>Eukaryota</taxon>
        <taxon>Viridiplantae</taxon>
        <taxon>Streptophyta</taxon>
        <taxon>Embryophyta</taxon>
        <taxon>Tracheophyta</taxon>
        <taxon>Spermatophyta</taxon>
        <taxon>Magnoliopsida</taxon>
        <taxon>Liliopsida</taxon>
        <taxon>Poales</taxon>
        <taxon>Poaceae</taxon>
        <taxon>BOP clade</taxon>
        <taxon>Oryzoideae</taxon>
        <taxon>Oryzeae</taxon>
        <taxon>Oryzinae</taxon>
        <taxon>Oryza</taxon>
        <taxon>Oryza sativa</taxon>
    </lineage>
</organism>
<keyword id="KW-0067">ATP-binding</keyword>
<keyword id="KW-0927">Auxin signaling pathway</keyword>
<keyword id="KW-0217">Developmental protein</keyword>
<keyword id="KW-0418">Kinase</keyword>
<keyword id="KW-0547">Nucleotide-binding</keyword>
<keyword id="KW-1185">Reference proteome</keyword>
<keyword id="KW-0723">Serine/threonine-protein kinase</keyword>
<keyword id="KW-0808">Transferase</keyword>
<feature type="chain" id="PRO_0000411973" description="Protein kinase PINOID 2">
    <location>
        <begin position="1"/>
        <end position="493"/>
    </location>
</feature>
<feature type="domain" description="Protein kinase" evidence="2">
    <location>
        <begin position="80"/>
        <end position="443"/>
    </location>
</feature>
<feature type="domain" description="AGC-kinase C-terminal">
    <location>
        <begin position="444"/>
        <end position="493"/>
    </location>
</feature>
<feature type="region of interest" description="Disordered" evidence="4">
    <location>
        <begin position="1"/>
        <end position="53"/>
    </location>
</feature>
<feature type="region of interest" description="Disordered" evidence="4">
    <location>
        <begin position="295"/>
        <end position="320"/>
    </location>
</feature>
<feature type="region of interest" description="Disordered" evidence="4">
    <location>
        <begin position="458"/>
        <end position="493"/>
    </location>
</feature>
<feature type="compositionally biased region" description="Low complexity" evidence="4">
    <location>
        <begin position="27"/>
        <end position="44"/>
    </location>
</feature>
<feature type="compositionally biased region" description="Gly residues" evidence="4">
    <location>
        <begin position="295"/>
        <end position="306"/>
    </location>
</feature>
<feature type="compositionally biased region" description="Acidic residues" evidence="4">
    <location>
        <begin position="307"/>
        <end position="319"/>
    </location>
</feature>
<feature type="compositionally biased region" description="Basic and acidic residues" evidence="4">
    <location>
        <begin position="474"/>
        <end position="493"/>
    </location>
</feature>
<feature type="active site" description="Proton acceptor" evidence="2 3">
    <location>
        <position position="216"/>
    </location>
</feature>
<feature type="binding site" evidence="2">
    <location>
        <begin position="86"/>
        <end position="94"/>
    </location>
    <ligand>
        <name>ATP</name>
        <dbReference type="ChEBI" id="CHEBI:30616"/>
    </ligand>
</feature>
<feature type="binding site" evidence="2">
    <location>
        <position position="120"/>
    </location>
    <ligand>
        <name>ATP</name>
        <dbReference type="ChEBI" id="CHEBI:30616"/>
    </ligand>
</feature>
<name>PID2_ORYSJ</name>
<protein>
    <recommendedName>
        <fullName>Protein kinase PINOID 2</fullName>
        <ecNumber>2.7.11.1</ecNumber>
    </recommendedName>
    <alternativeName>
        <fullName>Protein PID-like</fullName>
        <shortName>OsPIDlike</shortName>
    </alternativeName>
</protein>
<gene>
    <name type="primary">PID2</name>
    <name type="ordered locus">Os01g0174700</name>
    <name type="ordered locus">LOC_Os01g07940</name>
    <name type="ORF">OSJNBa0089K24.26</name>
</gene>
<sequence>MAAIKEESDYDSSRSSLTAPDSRRSWISDIGSSSSVSARSFGGDTPASSCRYKPHKANQAEWEAIRRLRAGAGRVGLEHFRLVRRLGSGDLGNVYLCRLREPWSSSSMTTTAGGCLYAMKVVDKDALAFRKKLRRAEVERDILRTLDHPFLPTLYADFEASHYACLVMEFCPGGDLHVARQRQPGRRFTVSSTRFYVAETVLALEYLHMMGVVYRDLKPENVLVRGDGHIMLSDFDLSLKCDVVPKLLRPARSAAAGGKPPLPPPSSCVPPTIQPVLSCIFRGVHKCHHAKECAGGGAAAGNNGDGDGNDEEAETETAEPEVVVVEPVAARSKSFVGTHEYLAPEVISGQGHGSAVDWWTLGVFMYEMLYGRTPFKGESNEKTLINIIKQPVTFPRLAGAAAAGEWEEMKTAQDLMLQLLAKNPKKRLGSTMGSAEVKRHPFFKGVNWALVRSVRPPEVPAPPAPAPKKVMTMSKKERQEPYNYRPENHFDYF</sequence>
<accession>Q94E49</accession>
<accession>A0A0P0UZJ4</accession>
<accession>Q5VR01</accession>
<evidence type="ECO:0000250" key="1"/>
<evidence type="ECO:0000255" key="2">
    <source>
        <dbReference type="PROSITE-ProRule" id="PRU00159"/>
    </source>
</evidence>
<evidence type="ECO:0000255" key="3">
    <source>
        <dbReference type="PROSITE-ProRule" id="PRU10027"/>
    </source>
</evidence>
<evidence type="ECO:0000256" key="4">
    <source>
        <dbReference type="SAM" id="MobiDB-lite"/>
    </source>
</evidence>
<evidence type="ECO:0000305" key="5"/>